<sequence length="351" mass="37452">MTILSDVKALGQQIWLDNLSRSLVQSGELAQMLKQGVCGVTSNPAIFQKAFAGDALYADEVAALKQQDLSPKQRYETMAVADVRAACGICLAEHESTGGKTGFVSLEVSPELSKDAQGTVEEARRLYAAIGCKNAMIKVPATDAGIDALETLVSDGISVNLTLLFSRVQTLKAYAAYARGIAKRLAAGQSVAHIHVVASFFISRVDGALDTTLPDHLKGKIAIALAKAAYQDWEQYFTTPEFAALEAQGANRVQLLWASTGVKNPAYPDTLYVDNLIGAHTVNTVPDATLKAFIDHGTAKATLTEGVEEAQAQLAETAALGIDVETLANRLQEDGLKQFEEAFEKLLAPLV</sequence>
<accession>A9M2N9</accession>
<name>TAL_NEIM0</name>
<evidence type="ECO:0000255" key="1">
    <source>
        <dbReference type="HAMAP-Rule" id="MF_00493"/>
    </source>
</evidence>
<reference key="1">
    <citation type="journal article" date="2008" name="Genomics">
        <title>Characterization of ST-4821 complex, a unique Neisseria meningitidis clone.</title>
        <authorList>
            <person name="Peng J."/>
            <person name="Yang L."/>
            <person name="Yang F."/>
            <person name="Yang J."/>
            <person name="Yan Y."/>
            <person name="Nie H."/>
            <person name="Zhang X."/>
            <person name="Xiong Z."/>
            <person name="Jiang Y."/>
            <person name="Cheng F."/>
            <person name="Xu X."/>
            <person name="Chen S."/>
            <person name="Sun L."/>
            <person name="Li W."/>
            <person name="Shen Y."/>
            <person name="Shao Z."/>
            <person name="Liang X."/>
            <person name="Xu J."/>
            <person name="Jin Q."/>
        </authorList>
    </citation>
    <scope>NUCLEOTIDE SEQUENCE [LARGE SCALE GENOMIC DNA]</scope>
    <source>
        <strain>053442</strain>
    </source>
</reference>
<proteinExistence type="inferred from homology"/>
<protein>
    <recommendedName>
        <fullName evidence="1">Transaldolase</fullName>
        <ecNumber evidence="1">2.2.1.2</ecNumber>
    </recommendedName>
</protein>
<keyword id="KW-0963">Cytoplasm</keyword>
<keyword id="KW-0570">Pentose shunt</keyword>
<keyword id="KW-0704">Schiff base</keyword>
<keyword id="KW-0808">Transferase</keyword>
<gene>
    <name evidence="1" type="primary">tal</name>
    <name type="ordered locus">NMCC_1791</name>
</gene>
<comment type="function">
    <text evidence="1">Transaldolase is important for the balance of metabolites in the pentose-phosphate pathway.</text>
</comment>
<comment type="catalytic activity">
    <reaction evidence="1">
        <text>D-sedoheptulose 7-phosphate + D-glyceraldehyde 3-phosphate = D-erythrose 4-phosphate + beta-D-fructose 6-phosphate</text>
        <dbReference type="Rhea" id="RHEA:17053"/>
        <dbReference type="ChEBI" id="CHEBI:16897"/>
        <dbReference type="ChEBI" id="CHEBI:57483"/>
        <dbReference type="ChEBI" id="CHEBI:57634"/>
        <dbReference type="ChEBI" id="CHEBI:59776"/>
        <dbReference type="EC" id="2.2.1.2"/>
    </reaction>
</comment>
<comment type="pathway">
    <text evidence="1">Carbohydrate degradation; pentose phosphate pathway; D-glyceraldehyde 3-phosphate and beta-D-fructose 6-phosphate from D-ribose 5-phosphate and D-xylulose 5-phosphate (non-oxidative stage): step 2/3.</text>
</comment>
<comment type="subcellular location">
    <subcellularLocation>
        <location evidence="1">Cytoplasm</location>
    </subcellularLocation>
</comment>
<comment type="similarity">
    <text evidence="1">Belongs to the transaldolase family. Type 2 subfamily.</text>
</comment>
<dbReference type="EC" id="2.2.1.2" evidence="1"/>
<dbReference type="EMBL" id="CP000381">
    <property type="protein sequence ID" value="ABX73931.1"/>
    <property type="molecule type" value="Genomic_DNA"/>
</dbReference>
<dbReference type="RefSeq" id="WP_012222023.1">
    <property type="nucleotide sequence ID" value="NC_010120.1"/>
</dbReference>
<dbReference type="SMR" id="A9M2N9"/>
<dbReference type="KEGG" id="nmn:NMCC_1791"/>
<dbReference type="HOGENOM" id="CLU_050771_1_0_4"/>
<dbReference type="UniPathway" id="UPA00115">
    <property type="reaction ID" value="UER00414"/>
</dbReference>
<dbReference type="Proteomes" id="UP000001177">
    <property type="component" value="Chromosome"/>
</dbReference>
<dbReference type="GO" id="GO:0005737">
    <property type="term" value="C:cytoplasm"/>
    <property type="evidence" value="ECO:0007669"/>
    <property type="project" value="UniProtKB-SubCell"/>
</dbReference>
<dbReference type="GO" id="GO:0004801">
    <property type="term" value="F:transaldolase activity"/>
    <property type="evidence" value="ECO:0007669"/>
    <property type="project" value="UniProtKB-UniRule"/>
</dbReference>
<dbReference type="GO" id="GO:0005975">
    <property type="term" value="P:carbohydrate metabolic process"/>
    <property type="evidence" value="ECO:0007669"/>
    <property type="project" value="InterPro"/>
</dbReference>
<dbReference type="GO" id="GO:0006098">
    <property type="term" value="P:pentose-phosphate shunt"/>
    <property type="evidence" value="ECO:0007669"/>
    <property type="project" value="UniProtKB-UniRule"/>
</dbReference>
<dbReference type="CDD" id="cd00955">
    <property type="entry name" value="Transaldolase_like"/>
    <property type="match status" value="1"/>
</dbReference>
<dbReference type="Gene3D" id="3.20.20.70">
    <property type="entry name" value="Aldolase class I"/>
    <property type="match status" value="1"/>
</dbReference>
<dbReference type="HAMAP" id="MF_00493">
    <property type="entry name" value="Transaldolase_2"/>
    <property type="match status" value="1"/>
</dbReference>
<dbReference type="InterPro" id="IPR013785">
    <property type="entry name" value="Aldolase_TIM"/>
</dbReference>
<dbReference type="InterPro" id="IPR001585">
    <property type="entry name" value="TAL/FSA"/>
</dbReference>
<dbReference type="InterPro" id="IPR004732">
    <property type="entry name" value="Transaldolase_2"/>
</dbReference>
<dbReference type="InterPro" id="IPR018225">
    <property type="entry name" value="Transaldolase_AS"/>
</dbReference>
<dbReference type="NCBIfam" id="NF002881">
    <property type="entry name" value="PRK03343.1"/>
    <property type="match status" value="1"/>
</dbReference>
<dbReference type="NCBIfam" id="TIGR00876">
    <property type="entry name" value="tal_mycobact"/>
    <property type="match status" value="1"/>
</dbReference>
<dbReference type="PANTHER" id="PTHR10683">
    <property type="entry name" value="TRANSALDOLASE"/>
    <property type="match status" value="1"/>
</dbReference>
<dbReference type="PANTHER" id="PTHR10683:SF31">
    <property type="entry name" value="TRANSALDOLASE"/>
    <property type="match status" value="1"/>
</dbReference>
<dbReference type="Pfam" id="PF00923">
    <property type="entry name" value="TAL_FSA"/>
    <property type="match status" value="1"/>
</dbReference>
<dbReference type="PIRSF" id="PIRSF036915">
    <property type="entry name" value="Trnald_Bac_Plnt"/>
    <property type="match status" value="1"/>
</dbReference>
<dbReference type="SUPFAM" id="SSF51569">
    <property type="entry name" value="Aldolase"/>
    <property type="match status" value="1"/>
</dbReference>
<dbReference type="PROSITE" id="PS01054">
    <property type="entry name" value="TRANSALDOLASE_1"/>
    <property type="match status" value="1"/>
</dbReference>
<dbReference type="PROSITE" id="PS00958">
    <property type="entry name" value="TRANSALDOLASE_2"/>
    <property type="match status" value="1"/>
</dbReference>
<feature type="chain" id="PRO_1000081402" description="Transaldolase">
    <location>
        <begin position="1"/>
        <end position="351"/>
    </location>
</feature>
<feature type="active site" description="Schiff-base intermediate with substrate" evidence="1">
    <location>
        <position position="138"/>
    </location>
</feature>
<organism>
    <name type="scientific">Neisseria meningitidis serogroup C (strain 053442)</name>
    <dbReference type="NCBI Taxonomy" id="374833"/>
    <lineage>
        <taxon>Bacteria</taxon>
        <taxon>Pseudomonadati</taxon>
        <taxon>Pseudomonadota</taxon>
        <taxon>Betaproteobacteria</taxon>
        <taxon>Neisseriales</taxon>
        <taxon>Neisseriaceae</taxon>
        <taxon>Neisseria</taxon>
    </lineage>
</organism>